<comment type="function">
    <text evidence="1">Specifically methylates the N7 position of guanine in position 527 of 16S rRNA.</text>
</comment>
<comment type="catalytic activity">
    <reaction evidence="1">
        <text>guanosine(527) in 16S rRNA + S-adenosyl-L-methionine = N(7)-methylguanosine(527) in 16S rRNA + S-adenosyl-L-homocysteine</text>
        <dbReference type="Rhea" id="RHEA:42732"/>
        <dbReference type="Rhea" id="RHEA-COMP:10209"/>
        <dbReference type="Rhea" id="RHEA-COMP:10210"/>
        <dbReference type="ChEBI" id="CHEBI:57856"/>
        <dbReference type="ChEBI" id="CHEBI:59789"/>
        <dbReference type="ChEBI" id="CHEBI:74269"/>
        <dbReference type="ChEBI" id="CHEBI:74480"/>
        <dbReference type="EC" id="2.1.1.170"/>
    </reaction>
</comment>
<comment type="subcellular location">
    <subcellularLocation>
        <location evidence="1">Cytoplasm</location>
    </subcellularLocation>
</comment>
<comment type="similarity">
    <text evidence="1">Belongs to the methyltransferase superfamily. RNA methyltransferase RsmG family.</text>
</comment>
<reference key="1">
    <citation type="journal article" date="2007" name="Genome Biol.">
        <title>Characterization and modeling of the Haemophilus influenzae core and supragenomes based on the complete genomic sequences of Rd and 12 clinical nontypeable strains.</title>
        <authorList>
            <person name="Hogg J.S."/>
            <person name="Hu F.Z."/>
            <person name="Janto B."/>
            <person name="Boissy R."/>
            <person name="Hayes J."/>
            <person name="Keefe R."/>
            <person name="Post J.C."/>
            <person name="Ehrlich G.D."/>
        </authorList>
    </citation>
    <scope>NUCLEOTIDE SEQUENCE [LARGE SCALE GENOMIC DNA]</scope>
    <source>
        <strain>PittGG</strain>
    </source>
</reference>
<keyword id="KW-0963">Cytoplasm</keyword>
<keyword id="KW-0489">Methyltransferase</keyword>
<keyword id="KW-0698">rRNA processing</keyword>
<keyword id="KW-0949">S-adenosyl-L-methionine</keyword>
<keyword id="KW-0808">Transferase</keyword>
<protein>
    <recommendedName>
        <fullName evidence="1">Ribosomal RNA small subunit methyltransferase G</fullName>
        <ecNumber evidence="1">2.1.1.170</ecNumber>
    </recommendedName>
    <alternativeName>
        <fullName evidence="1">16S rRNA 7-methylguanosine methyltransferase</fullName>
        <shortName evidence="1">16S rRNA m7G methyltransferase</shortName>
    </alternativeName>
</protein>
<evidence type="ECO:0000255" key="1">
    <source>
        <dbReference type="HAMAP-Rule" id="MF_00074"/>
    </source>
</evidence>
<organism>
    <name type="scientific">Haemophilus influenzae (strain PittGG)</name>
    <dbReference type="NCBI Taxonomy" id="374931"/>
    <lineage>
        <taxon>Bacteria</taxon>
        <taxon>Pseudomonadati</taxon>
        <taxon>Pseudomonadota</taxon>
        <taxon>Gammaproteobacteria</taxon>
        <taxon>Pasteurellales</taxon>
        <taxon>Pasteurellaceae</taxon>
        <taxon>Haemophilus</taxon>
    </lineage>
</organism>
<proteinExistence type="inferred from homology"/>
<gene>
    <name evidence="1" type="primary">rsmG</name>
    <name type="ordered locus">CGSHiGG_05690</name>
</gene>
<name>RSMG_HAEIG</name>
<sequence>MKAKLVSLLAQANIKISDQQIQQLINLVNLLNKWNKAYNLTSVRDPQEMLVKHILDSLVVSPYLQGDRFIDVGTGPGLPGLPLAIINPSKQFVLLDSLGKRISFIRNAIRELRLTNVTPVLSRVEEYQPEDKFDGVLSRAFASLKDMTDWCHHLPKENGYFYALKGIYQEDEINELNKKYTIQKVIELSVPELIGERHLIVLR</sequence>
<accession>A5UGZ7</accession>
<dbReference type="EC" id="2.1.1.170" evidence="1"/>
<dbReference type="EMBL" id="CP000672">
    <property type="protein sequence ID" value="ABR00053.1"/>
    <property type="molecule type" value="Genomic_DNA"/>
</dbReference>
<dbReference type="SMR" id="A5UGZ7"/>
<dbReference type="KEGG" id="hiq:CGSHiGG_05690"/>
<dbReference type="HOGENOM" id="CLU_065341_2_2_6"/>
<dbReference type="Proteomes" id="UP000001990">
    <property type="component" value="Chromosome"/>
</dbReference>
<dbReference type="GO" id="GO:0005829">
    <property type="term" value="C:cytosol"/>
    <property type="evidence" value="ECO:0007669"/>
    <property type="project" value="TreeGrafter"/>
</dbReference>
<dbReference type="GO" id="GO:0070043">
    <property type="term" value="F:rRNA (guanine-N7-)-methyltransferase activity"/>
    <property type="evidence" value="ECO:0007669"/>
    <property type="project" value="UniProtKB-UniRule"/>
</dbReference>
<dbReference type="CDD" id="cd02440">
    <property type="entry name" value="AdoMet_MTases"/>
    <property type="match status" value="1"/>
</dbReference>
<dbReference type="FunFam" id="3.40.50.150:FF:000032">
    <property type="entry name" value="Ribosomal RNA small subunit methyltransferase G"/>
    <property type="match status" value="1"/>
</dbReference>
<dbReference type="Gene3D" id="3.40.50.150">
    <property type="entry name" value="Vaccinia Virus protein VP39"/>
    <property type="match status" value="1"/>
</dbReference>
<dbReference type="HAMAP" id="MF_00074">
    <property type="entry name" value="16SrRNA_methyltr_G"/>
    <property type="match status" value="1"/>
</dbReference>
<dbReference type="InterPro" id="IPR003682">
    <property type="entry name" value="rRNA_ssu_MeTfrase_G"/>
</dbReference>
<dbReference type="InterPro" id="IPR029063">
    <property type="entry name" value="SAM-dependent_MTases_sf"/>
</dbReference>
<dbReference type="NCBIfam" id="TIGR00138">
    <property type="entry name" value="rsmG_gidB"/>
    <property type="match status" value="1"/>
</dbReference>
<dbReference type="PANTHER" id="PTHR31760">
    <property type="entry name" value="S-ADENOSYL-L-METHIONINE-DEPENDENT METHYLTRANSFERASES SUPERFAMILY PROTEIN"/>
    <property type="match status" value="1"/>
</dbReference>
<dbReference type="PANTHER" id="PTHR31760:SF0">
    <property type="entry name" value="S-ADENOSYL-L-METHIONINE-DEPENDENT METHYLTRANSFERASES SUPERFAMILY PROTEIN"/>
    <property type="match status" value="1"/>
</dbReference>
<dbReference type="Pfam" id="PF02527">
    <property type="entry name" value="GidB"/>
    <property type="match status" value="1"/>
</dbReference>
<dbReference type="PIRSF" id="PIRSF003078">
    <property type="entry name" value="GidB"/>
    <property type="match status" value="1"/>
</dbReference>
<dbReference type="SUPFAM" id="SSF53335">
    <property type="entry name" value="S-adenosyl-L-methionine-dependent methyltransferases"/>
    <property type="match status" value="1"/>
</dbReference>
<feature type="chain" id="PRO_1000010154" description="Ribosomal RNA small subunit methyltransferase G">
    <location>
        <begin position="1"/>
        <end position="203"/>
    </location>
</feature>
<feature type="binding site" evidence="1">
    <location>
        <position position="73"/>
    </location>
    <ligand>
        <name>S-adenosyl-L-methionine</name>
        <dbReference type="ChEBI" id="CHEBI:59789"/>
    </ligand>
</feature>
<feature type="binding site" evidence="1">
    <location>
        <position position="78"/>
    </location>
    <ligand>
        <name>S-adenosyl-L-methionine</name>
        <dbReference type="ChEBI" id="CHEBI:59789"/>
    </ligand>
</feature>
<feature type="binding site" evidence="1">
    <location>
        <begin position="124"/>
        <end position="125"/>
    </location>
    <ligand>
        <name>S-adenosyl-L-methionine</name>
        <dbReference type="ChEBI" id="CHEBI:59789"/>
    </ligand>
</feature>
<feature type="binding site" evidence="1">
    <location>
        <position position="139"/>
    </location>
    <ligand>
        <name>S-adenosyl-L-methionine</name>
        <dbReference type="ChEBI" id="CHEBI:59789"/>
    </ligand>
</feature>